<gene>
    <name evidence="1" type="primary">uppS</name>
    <name type="ordered locus">BPP1531</name>
</gene>
<evidence type="ECO:0000255" key="1">
    <source>
        <dbReference type="HAMAP-Rule" id="MF_01139"/>
    </source>
</evidence>
<evidence type="ECO:0000305" key="2"/>
<organism>
    <name type="scientific">Bordetella parapertussis (strain 12822 / ATCC BAA-587 / NCTC 13253)</name>
    <dbReference type="NCBI Taxonomy" id="257311"/>
    <lineage>
        <taxon>Bacteria</taxon>
        <taxon>Pseudomonadati</taxon>
        <taxon>Pseudomonadota</taxon>
        <taxon>Betaproteobacteria</taxon>
        <taxon>Burkholderiales</taxon>
        <taxon>Alcaligenaceae</taxon>
        <taxon>Bordetella</taxon>
    </lineage>
</organism>
<reference key="1">
    <citation type="journal article" date="2003" name="Nat. Genet.">
        <title>Comparative analysis of the genome sequences of Bordetella pertussis, Bordetella parapertussis and Bordetella bronchiseptica.</title>
        <authorList>
            <person name="Parkhill J."/>
            <person name="Sebaihia M."/>
            <person name="Preston A."/>
            <person name="Murphy L.D."/>
            <person name="Thomson N.R."/>
            <person name="Harris D.E."/>
            <person name="Holden M.T.G."/>
            <person name="Churcher C.M."/>
            <person name="Bentley S.D."/>
            <person name="Mungall K.L."/>
            <person name="Cerdeno-Tarraga A.-M."/>
            <person name="Temple L."/>
            <person name="James K.D."/>
            <person name="Harris B."/>
            <person name="Quail M.A."/>
            <person name="Achtman M."/>
            <person name="Atkin R."/>
            <person name="Baker S."/>
            <person name="Basham D."/>
            <person name="Bason N."/>
            <person name="Cherevach I."/>
            <person name="Chillingworth T."/>
            <person name="Collins M."/>
            <person name="Cronin A."/>
            <person name="Davis P."/>
            <person name="Doggett J."/>
            <person name="Feltwell T."/>
            <person name="Goble A."/>
            <person name="Hamlin N."/>
            <person name="Hauser H."/>
            <person name="Holroyd S."/>
            <person name="Jagels K."/>
            <person name="Leather S."/>
            <person name="Moule S."/>
            <person name="Norberczak H."/>
            <person name="O'Neil S."/>
            <person name="Ormond D."/>
            <person name="Price C."/>
            <person name="Rabbinowitsch E."/>
            <person name="Rutter S."/>
            <person name="Sanders M."/>
            <person name="Saunders D."/>
            <person name="Seeger K."/>
            <person name="Sharp S."/>
            <person name="Simmonds M."/>
            <person name="Skelton J."/>
            <person name="Squares R."/>
            <person name="Squares S."/>
            <person name="Stevens K."/>
            <person name="Unwin L."/>
            <person name="Whitehead S."/>
            <person name="Barrell B.G."/>
            <person name="Maskell D.J."/>
        </authorList>
    </citation>
    <scope>NUCLEOTIDE SEQUENCE [LARGE SCALE GENOMIC DNA]</scope>
    <source>
        <strain>12822 / ATCC BAA-587 / NCTC 13253</strain>
    </source>
</reference>
<sequence length="254" mass="29079">MALSSTQAIPETGDIPRHVAIIMDGNGRWATRRHLPRTAGHAKGVHAVRRVVEACGRRGVRYLTLFAFSSENWRRPADEVSLLMRLFVQALEREVDKLQDQGVRLHVVGDLSAFEPKLQELIAQAQERTEHNDRLHLTVAANYGGRWDILQATRAMLRADPGLAQDPDRIDEARLAEHLSMAWAPEPDLFIRTGGEQRISNFLVWQLAYAEFYFTEQFWPDFGADELDAAFEWYRTRERRFGRTSAQLRGGAKR</sequence>
<proteinExistence type="inferred from homology"/>
<dbReference type="EC" id="2.5.1.-" evidence="1"/>
<dbReference type="EMBL" id="BX640427">
    <property type="protein sequence ID" value="CAE36833.1"/>
    <property type="status" value="ALT_INIT"/>
    <property type="molecule type" value="Genomic_DNA"/>
</dbReference>
<dbReference type="RefSeq" id="WP_010930350.1">
    <property type="nucleotide sequence ID" value="NC_002928.3"/>
</dbReference>
<dbReference type="SMR" id="Q7WA56"/>
<dbReference type="GeneID" id="69601334"/>
<dbReference type="GeneID" id="93203290"/>
<dbReference type="KEGG" id="bpa:BPP1531"/>
<dbReference type="HOGENOM" id="CLU_038505_1_2_4"/>
<dbReference type="Proteomes" id="UP000001421">
    <property type="component" value="Chromosome"/>
</dbReference>
<dbReference type="GO" id="GO:0005829">
    <property type="term" value="C:cytosol"/>
    <property type="evidence" value="ECO:0007669"/>
    <property type="project" value="TreeGrafter"/>
</dbReference>
<dbReference type="GO" id="GO:0008834">
    <property type="term" value="F:ditrans,polycis-undecaprenyl-diphosphate synthase [(2E,6E)-farnesyl-diphosphate specific] activity"/>
    <property type="evidence" value="ECO:0007669"/>
    <property type="project" value="TreeGrafter"/>
</dbReference>
<dbReference type="GO" id="GO:0000287">
    <property type="term" value="F:magnesium ion binding"/>
    <property type="evidence" value="ECO:0007669"/>
    <property type="project" value="UniProtKB-UniRule"/>
</dbReference>
<dbReference type="GO" id="GO:0016094">
    <property type="term" value="P:polyprenol biosynthetic process"/>
    <property type="evidence" value="ECO:0007669"/>
    <property type="project" value="TreeGrafter"/>
</dbReference>
<dbReference type="CDD" id="cd00475">
    <property type="entry name" value="Cis_IPPS"/>
    <property type="match status" value="1"/>
</dbReference>
<dbReference type="FunFam" id="3.40.1180.10:FF:000001">
    <property type="entry name" value="(2E,6E)-farnesyl-diphosphate-specific ditrans,polycis-undecaprenyl-diphosphate synthase"/>
    <property type="match status" value="1"/>
</dbReference>
<dbReference type="Gene3D" id="3.40.1180.10">
    <property type="entry name" value="Decaprenyl diphosphate synthase-like"/>
    <property type="match status" value="1"/>
</dbReference>
<dbReference type="HAMAP" id="MF_01139">
    <property type="entry name" value="ISPT"/>
    <property type="match status" value="1"/>
</dbReference>
<dbReference type="InterPro" id="IPR001441">
    <property type="entry name" value="UPP_synth-like"/>
</dbReference>
<dbReference type="InterPro" id="IPR018520">
    <property type="entry name" value="UPP_synth-like_CS"/>
</dbReference>
<dbReference type="InterPro" id="IPR036424">
    <property type="entry name" value="UPP_synth-like_sf"/>
</dbReference>
<dbReference type="NCBIfam" id="TIGR00055">
    <property type="entry name" value="uppS"/>
    <property type="match status" value="1"/>
</dbReference>
<dbReference type="PANTHER" id="PTHR10291:SF0">
    <property type="entry name" value="DEHYDRODOLICHYL DIPHOSPHATE SYNTHASE 2"/>
    <property type="match status" value="1"/>
</dbReference>
<dbReference type="PANTHER" id="PTHR10291">
    <property type="entry name" value="DEHYDRODOLICHYL DIPHOSPHATE SYNTHASE FAMILY MEMBER"/>
    <property type="match status" value="1"/>
</dbReference>
<dbReference type="Pfam" id="PF01255">
    <property type="entry name" value="Prenyltransf"/>
    <property type="match status" value="1"/>
</dbReference>
<dbReference type="SUPFAM" id="SSF64005">
    <property type="entry name" value="Undecaprenyl diphosphate synthase"/>
    <property type="match status" value="1"/>
</dbReference>
<dbReference type="PROSITE" id="PS01066">
    <property type="entry name" value="UPP_SYNTHASE"/>
    <property type="match status" value="1"/>
</dbReference>
<keyword id="KW-0460">Magnesium</keyword>
<keyword id="KW-0479">Metal-binding</keyword>
<keyword id="KW-0808">Transferase</keyword>
<name>ISPT_BORPA</name>
<feature type="chain" id="PRO_0000123577" description="Isoprenyl transferase">
    <location>
        <begin position="1"/>
        <end position="254"/>
    </location>
</feature>
<feature type="active site" evidence="1">
    <location>
        <position position="24"/>
    </location>
</feature>
<feature type="active site" description="Proton acceptor" evidence="1">
    <location>
        <position position="72"/>
    </location>
</feature>
<feature type="binding site" evidence="1">
    <location>
        <position position="24"/>
    </location>
    <ligand>
        <name>Mg(2+)</name>
        <dbReference type="ChEBI" id="CHEBI:18420"/>
    </ligand>
</feature>
<feature type="binding site" evidence="1">
    <location>
        <begin position="25"/>
        <end position="28"/>
    </location>
    <ligand>
        <name>substrate</name>
    </ligand>
</feature>
<feature type="binding site" evidence="1">
    <location>
        <position position="29"/>
    </location>
    <ligand>
        <name>substrate</name>
    </ligand>
</feature>
<feature type="binding site" evidence="1">
    <location>
        <position position="37"/>
    </location>
    <ligand>
        <name>substrate</name>
    </ligand>
</feature>
<feature type="binding site" evidence="1">
    <location>
        <position position="41"/>
    </location>
    <ligand>
        <name>substrate</name>
    </ligand>
</feature>
<feature type="binding site" evidence="1">
    <location>
        <begin position="69"/>
        <end position="71"/>
    </location>
    <ligand>
        <name>substrate</name>
    </ligand>
</feature>
<feature type="binding site" evidence="1">
    <location>
        <position position="73"/>
    </location>
    <ligand>
        <name>substrate</name>
    </ligand>
</feature>
<feature type="binding site" evidence="1">
    <location>
        <position position="75"/>
    </location>
    <ligand>
        <name>substrate</name>
    </ligand>
</feature>
<feature type="binding site" evidence="1">
    <location>
        <position position="192"/>
    </location>
    <ligand>
        <name>substrate</name>
    </ligand>
</feature>
<feature type="binding site" evidence="1">
    <location>
        <begin position="198"/>
        <end position="200"/>
    </location>
    <ligand>
        <name>substrate</name>
    </ligand>
</feature>
<feature type="binding site" evidence="1">
    <location>
        <position position="211"/>
    </location>
    <ligand>
        <name>Mg(2+)</name>
        <dbReference type="ChEBI" id="CHEBI:18420"/>
    </ligand>
</feature>
<comment type="function">
    <text evidence="1">Catalyzes the condensation of isopentenyl diphosphate (IPP) with allylic pyrophosphates generating different type of terpenoids.</text>
</comment>
<comment type="cofactor">
    <cofactor evidence="1">
        <name>Mg(2+)</name>
        <dbReference type="ChEBI" id="CHEBI:18420"/>
    </cofactor>
    <text evidence="1">Binds 2 magnesium ions per subunit.</text>
</comment>
<comment type="subunit">
    <text evidence="1">Homodimer.</text>
</comment>
<comment type="similarity">
    <text evidence="1">Belongs to the UPP synthase family.</text>
</comment>
<comment type="sequence caution" evidence="2">
    <conflict type="erroneous initiation">
        <sequence resource="EMBL-CDS" id="CAE36833"/>
    </conflict>
    <text>Extended N-terminus.</text>
</comment>
<protein>
    <recommendedName>
        <fullName evidence="1">Isoprenyl transferase</fullName>
        <ecNumber evidence="1">2.5.1.-</ecNumber>
    </recommendedName>
</protein>
<accession>Q7WA56</accession>